<proteinExistence type="evidence at protein level"/>
<organism>
    <name type="scientific">Escherichia coli (strain K12)</name>
    <dbReference type="NCBI Taxonomy" id="83333"/>
    <lineage>
        <taxon>Bacteria</taxon>
        <taxon>Pseudomonadati</taxon>
        <taxon>Pseudomonadota</taxon>
        <taxon>Gammaproteobacteria</taxon>
        <taxon>Enterobacterales</taxon>
        <taxon>Enterobacteriaceae</taxon>
        <taxon>Escherichia</taxon>
    </lineage>
</organism>
<keyword id="KW-0004">4Fe-4S</keyword>
<keyword id="KW-0143">Chaperone</keyword>
<keyword id="KW-0963">Cytoplasm</keyword>
<keyword id="KW-0349">Heme</keyword>
<keyword id="KW-0408">Iron</keyword>
<keyword id="KW-0411">Iron-sulfur</keyword>
<keyword id="KW-0479">Metal-binding</keyword>
<keyword id="KW-1185">Reference proteome</keyword>
<keyword id="KW-0949">S-adenosyl-L-methionine</keyword>
<comment type="function">
    <text evidence="3 6">Probably acts as a heme chaperone, transferring heme to the NarI subunit of the respiratory enzyme nitrate reductase; transfer may be stimulated by NADH. Binds one molecule of heme per monomer, possibly covalently. Heme binding is not affected by either [4Fe-4S] or S-adenosyl-L-methionine (SAM)-binding. Does not have coproporphyrinogen III dehydrogenase activity in vitro (PubMed:29282292). Binds 1 [4Fe-4S] cluster. The cluster is coordinated with 3 cysteines and an exchangeable S-adenosyl-L-methionine (Probable).</text>
</comment>
<comment type="cofactor">
    <cofactor evidence="2">
        <name>[4Fe-4S] cluster</name>
        <dbReference type="ChEBI" id="CHEBI:49883"/>
    </cofactor>
</comment>
<comment type="subunit">
    <text evidence="3">Binding of the [4Fe-4S] cofactor promotes dimerization.</text>
</comment>
<comment type="subcellular location">
    <subcellularLocation>
        <location evidence="6">Cytoplasm</location>
    </subcellularLocation>
</comment>
<comment type="disruption phenotype">
    <text evidence="3">Very slightly decreased anaerobic growth in minimal medium with KNO(3) and glycerol.</text>
</comment>
<comment type="miscellaneous">
    <text evidence="6">Might carry two S-adenosyl-L-methionine binding sites with only one binding to the iron-sulfur cluster.</text>
</comment>
<comment type="similarity">
    <text evidence="5">Belongs to the anaerobic coproporphyrinogen-III oxidase family. HemW subfamily.</text>
</comment>
<evidence type="ECO:0000250" key="1">
    <source>
        <dbReference type="UniProtKB" id="P32131"/>
    </source>
</evidence>
<evidence type="ECO:0000255" key="2">
    <source>
        <dbReference type="PROSITE-ProRule" id="PRU01266"/>
    </source>
</evidence>
<evidence type="ECO:0000269" key="3">
    <source>
    </source>
</evidence>
<evidence type="ECO:0000303" key="4">
    <source>
    </source>
</evidence>
<evidence type="ECO:0000305" key="5"/>
<evidence type="ECO:0000305" key="6">
    <source>
    </source>
</evidence>
<dbReference type="EMBL" id="U28377">
    <property type="protein sequence ID" value="AAA69122.1"/>
    <property type="molecule type" value="Genomic_DNA"/>
</dbReference>
<dbReference type="EMBL" id="U00096">
    <property type="protein sequence ID" value="AAC75992.1"/>
    <property type="molecule type" value="Genomic_DNA"/>
</dbReference>
<dbReference type="EMBL" id="AP009048">
    <property type="protein sequence ID" value="BAE77018.1"/>
    <property type="molecule type" value="Genomic_DNA"/>
</dbReference>
<dbReference type="PIR" id="B65081">
    <property type="entry name" value="B65081"/>
</dbReference>
<dbReference type="RefSeq" id="NP_417430.1">
    <property type="nucleotide sequence ID" value="NC_000913.3"/>
</dbReference>
<dbReference type="RefSeq" id="WP_000239943.1">
    <property type="nucleotide sequence ID" value="NZ_SSUV01000019.1"/>
</dbReference>
<dbReference type="SMR" id="P52062"/>
<dbReference type="BioGRID" id="4262352">
    <property type="interactions" value="52"/>
</dbReference>
<dbReference type="BioGRID" id="851766">
    <property type="interactions" value="5"/>
</dbReference>
<dbReference type="FunCoup" id="P52062">
    <property type="interactions" value="832"/>
</dbReference>
<dbReference type="IntAct" id="P52062">
    <property type="interactions" value="15"/>
</dbReference>
<dbReference type="STRING" id="511145.b2955"/>
<dbReference type="jPOST" id="P52062"/>
<dbReference type="PaxDb" id="511145-b2955"/>
<dbReference type="EnsemblBacteria" id="AAC75992">
    <property type="protein sequence ID" value="AAC75992"/>
    <property type="gene ID" value="b2955"/>
</dbReference>
<dbReference type="GeneID" id="947446"/>
<dbReference type="KEGG" id="ecj:JW2922"/>
<dbReference type="KEGG" id="eco:b2955"/>
<dbReference type="KEGG" id="ecoc:C3026_16170"/>
<dbReference type="PATRIC" id="fig|1411691.4.peg.3777"/>
<dbReference type="EchoBASE" id="EB2808"/>
<dbReference type="eggNOG" id="COG0635">
    <property type="taxonomic scope" value="Bacteria"/>
</dbReference>
<dbReference type="HOGENOM" id="CLU_027579_2_1_6"/>
<dbReference type="InParanoid" id="P52062"/>
<dbReference type="OMA" id="HIPWCVR"/>
<dbReference type="OrthoDB" id="9808022at2"/>
<dbReference type="PhylomeDB" id="P52062"/>
<dbReference type="BioCyc" id="EcoCyc:G7531-MONOMER"/>
<dbReference type="PRO" id="PR:P52062"/>
<dbReference type="Proteomes" id="UP000000625">
    <property type="component" value="Chromosome"/>
</dbReference>
<dbReference type="GO" id="GO:0005737">
    <property type="term" value="C:cytoplasm"/>
    <property type="evidence" value="ECO:0000250"/>
    <property type="project" value="UniProtKB"/>
</dbReference>
<dbReference type="GO" id="GO:0051539">
    <property type="term" value="F:4 iron, 4 sulfur cluster binding"/>
    <property type="evidence" value="ECO:0000314"/>
    <property type="project" value="EcoCyc"/>
</dbReference>
<dbReference type="GO" id="GO:0004109">
    <property type="term" value="F:coproporphyrinogen oxidase activity"/>
    <property type="evidence" value="ECO:0007669"/>
    <property type="project" value="InterPro"/>
</dbReference>
<dbReference type="GO" id="GO:0020037">
    <property type="term" value="F:heme binding"/>
    <property type="evidence" value="ECO:0000314"/>
    <property type="project" value="EcoCyc"/>
</dbReference>
<dbReference type="GO" id="GO:0046872">
    <property type="term" value="F:metal ion binding"/>
    <property type="evidence" value="ECO:0007669"/>
    <property type="project" value="UniProtKB-KW"/>
</dbReference>
<dbReference type="GO" id="GO:0042803">
    <property type="term" value="F:protein homodimerization activity"/>
    <property type="evidence" value="ECO:0000314"/>
    <property type="project" value="EcoCyc"/>
</dbReference>
<dbReference type="GO" id="GO:0006779">
    <property type="term" value="P:porphyrin-containing compound biosynthetic process"/>
    <property type="evidence" value="ECO:0000250"/>
    <property type="project" value="UniProtKB"/>
</dbReference>
<dbReference type="CDD" id="cd01335">
    <property type="entry name" value="Radical_SAM"/>
    <property type="match status" value="1"/>
</dbReference>
<dbReference type="FunFam" id="3.20.20.70:FF:000124">
    <property type="entry name" value="Heme chaperone HemW"/>
    <property type="match status" value="1"/>
</dbReference>
<dbReference type="Gene3D" id="3.20.20.70">
    <property type="entry name" value="Aldolase class I"/>
    <property type="match status" value="1"/>
</dbReference>
<dbReference type="InterPro" id="IPR013785">
    <property type="entry name" value="Aldolase_TIM"/>
</dbReference>
<dbReference type="InterPro" id="IPR034505">
    <property type="entry name" value="Coproporphyrinogen-III_oxidase"/>
</dbReference>
<dbReference type="InterPro" id="IPR006638">
    <property type="entry name" value="Elp3/MiaA/NifB-like_rSAM"/>
</dbReference>
<dbReference type="InterPro" id="IPR010723">
    <property type="entry name" value="HemN_C"/>
</dbReference>
<dbReference type="InterPro" id="IPR004559">
    <property type="entry name" value="HemW-like"/>
</dbReference>
<dbReference type="InterPro" id="IPR007197">
    <property type="entry name" value="rSAM"/>
</dbReference>
<dbReference type="NCBIfam" id="TIGR00539">
    <property type="entry name" value="hemN_rel"/>
    <property type="match status" value="1"/>
</dbReference>
<dbReference type="PANTHER" id="PTHR13932">
    <property type="entry name" value="COPROPORPHYRINIGEN III OXIDASE"/>
    <property type="match status" value="1"/>
</dbReference>
<dbReference type="PANTHER" id="PTHR13932:SF5">
    <property type="entry name" value="RADICAL S-ADENOSYL METHIONINE DOMAIN-CONTAINING PROTEIN 1, MITOCHONDRIAL"/>
    <property type="match status" value="1"/>
</dbReference>
<dbReference type="Pfam" id="PF06969">
    <property type="entry name" value="HemN_C"/>
    <property type="match status" value="1"/>
</dbReference>
<dbReference type="Pfam" id="PF04055">
    <property type="entry name" value="Radical_SAM"/>
    <property type="match status" value="1"/>
</dbReference>
<dbReference type="SFLD" id="SFLDG01082">
    <property type="entry name" value="B12-binding_domain_containing"/>
    <property type="match status" value="1"/>
</dbReference>
<dbReference type="SFLD" id="SFLDF00562">
    <property type="entry name" value="HemN-like__clustered_with_heat"/>
    <property type="match status" value="1"/>
</dbReference>
<dbReference type="SFLD" id="SFLDF00288">
    <property type="entry name" value="HemN-like__clustered_with_nucl"/>
    <property type="match status" value="1"/>
</dbReference>
<dbReference type="SFLD" id="SFLDS00029">
    <property type="entry name" value="Radical_SAM"/>
    <property type="match status" value="1"/>
</dbReference>
<dbReference type="SMART" id="SM00729">
    <property type="entry name" value="Elp3"/>
    <property type="match status" value="1"/>
</dbReference>
<dbReference type="SUPFAM" id="SSF102114">
    <property type="entry name" value="Radical SAM enzymes"/>
    <property type="match status" value="1"/>
</dbReference>
<dbReference type="PROSITE" id="PS51918">
    <property type="entry name" value="RADICAL_SAM"/>
    <property type="match status" value="1"/>
</dbReference>
<accession>P52062</accession>
<accession>Q2M9N8</accession>
<reference key="1">
    <citation type="journal article" date="1997" name="Science">
        <title>The complete genome sequence of Escherichia coli K-12.</title>
        <authorList>
            <person name="Blattner F.R."/>
            <person name="Plunkett G. III"/>
            <person name="Bloch C.A."/>
            <person name="Perna N.T."/>
            <person name="Burland V."/>
            <person name="Riley M."/>
            <person name="Collado-Vides J."/>
            <person name="Glasner J.D."/>
            <person name="Rode C.K."/>
            <person name="Mayhew G.F."/>
            <person name="Gregor J."/>
            <person name="Davis N.W."/>
            <person name="Kirkpatrick H.A."/>
            <person name="Goeden M.A."/>
            <person name="Rose D.J."/>
            <person name="Mau B."/>
            <person name="Shao Y."/>
        </authorList>
    </citation>
    <scope>NUCLEOTIDE SEQUENCE [LARGE SCALE GENOMIC DNA]</scope>
    <source>
        <strain>K12 / MG1655 / ATCC 47076</strain>
    </source>
</reference>
<reference key="2">
    <citation type="journal article" date="2006" name="Mol. Syst. Biol.">
        <title>Highly accurate genome sequences of Escherichia coli K-12 strains MG1655 and W3110.</title>
        <authorList>
            <person name="Hayashi K."/>
            <person name="Morooka N."/>
            <person name="Yamamoto Y."/>
            <person name="Fujita K."/>
            <person name="Isono K."/>
            <person name="Choi S."/>
            <person name="Ohtsubo E."/>
            <person name="Baba T."/>
            <person name="Wanner B.L."/>
            <person name="Mori H."/>
            <person name="Horiuchi T."/>
        </authorList>
    </citation>
    <scope>NUCLEOTIDE SEQUENCE [LARGE SCALE GENOMIC DNA]</scope>
    <source>
        <strain>K12 / W3110 / ATCC 27325 / DSM 5911</strain>
    </source>
</reference>
<reference key="3">
    <citation type="thesis" date="1977" institute="University of Geneva" country="Switzerland">
        <authorList>
            <person name="Hauert J."/>
        </authorList>
    </citation>
    <scope>FE-S CLUSTER</scope>
    <source>
        <strain>K12</strain>
    </source>
</reference>
<reference key="4">
    <citation type="journal article" date="2018" name="J. Biol. Chem.">
        <title>The radical SAM protein HemW is a heme chaperone.</title>
        <authorList>
            <person name="Haskamp V."/>
            <person name="Karrie S."/>
            <person name="Mingers T."/>
            <person name="Barthels S."/>
            <person name="Alberge F."/>
            <person name="Magalon A."/>
            <person name="Mueller K."/>
            <person name="Bill E."/>
            <person name="Lubitz W."/>
            <person name="Kleeberg K."/>
            <person name="Schweyen P."/>
            <person name="Broering M."/>
            <person name="Jahn M."/>
            <person name="Jahn D."/>
        </authorList>
    </citation>
    <scope>FUNCTION</scope>
    <scope>4FE-4S CLUSTER</scope>
    <scope>SUBUNIT</scope>
    <scope>DISRUPTION PHENOTYPE</scope>
    <scope>HEME-BINDING</scope>
    <scope>MUTAGENESIS OF 16-CYS--CYS-23</scope>
</reference>
<sequence length="378" mass="42584">MVKLPPLSLYIHIPWCVQKCPYCDFNSHALKGEVPHDDYVQHLLNDLDNDVAYAQGREVKTIFIGGGTPSLLSGPAMQTLLDGVRARLPLAADAEITMEANPGTVEADRFVDYQRAGVNRISIGVQSFSEEKLKRLGRIHGPQEAKRAAKLASGLGLRSFNLDLMHGLPDQSLEEALGDLRQAIELNPPHLSWYQLTIEPNTLFGSRPPVLPDDDALWDIFEQGHQLLTAAGYQQYETSAYAKPGYQCQHNLNYWRFGDYIGIGCGAHGKVTFPDGRILRTTKTRHPRGFMQGRYLESQRDVEATDKPFEFFMNRFRLLEAAPRVEFIAYTGLCEDVIRPQLDEAIAQGYLTECADYWQITEHGKLFLNSLLELFLAE</sequence>
<protein>
    <recommendedName>
        <fullName evidence="4">Heme chaperone HemW</fullName>
    </recommendedName>
</protein>
<gene>
    <name evidence="4" type="primary">hemW</name>
    <name type="synonym">yggW</name>
    <name type="ordered locus">b2955</name>
    <name type="ordered locus">JW2922</name>
</gene>
<feature type="chain" id="PRO_0000109956" description="Heme chaperone HemW">
    <location>
        <begin position="1"/>
        <end position="378"/>
    </location>
</feature>
<feature type="domain" description="Radical SAM core" evidence="2">
    <location>
        <begin position="1"/>
        <end position="237"/>
    </location>
</feature>
<feature type="binding site" evidence="1">
    <location>
        <position position="10"/>
    </location>
    <ligand>
        <name>S-adenosyl-L-methionine</name>
        <dbReference type="ChEBI" id="CHEBI:59789"/>
        <label>1</label>
    </ligand>
</feature>
<feature type="binding site" evidence="1">
    <location>
        <position position="16"/>
    </location>
    <ligand>
        <name>[4Fe-4S] cluster</name>
        <dbReference type="ChEBI" id="CHEBI:49883"/>
        <note>4Fe-4S-S-AdoMet</note>
    </ligand>
</feature>
<feature type="binding site" evidence="1">
    <location>
        <position position="20"/>
    </location>
    <ligand>
        <name>[4Fe-4S] cluster</name>
        <dbReference type="ChEBI" id="CHEBI:49883"/>
        <note>4Fe-4S-S-AdoMet</note>
    </ligand>
</feature>
<feature type="binding site" evidence="1">
    <location>
        <position position="23"/>
    </location>
    <ligand>
        <name>[4Fe-4S] cluster</name>
        <dbReference type="ChEBI" id="CHEBI:49883"/>
        <note>4Fe-4S-S-AdoMet</note>
    </ligand>
</feature>
<feature type="binding site" evidence="1">
    <location>
        <position position="66"/>
    </location>
    <ligand>
        <name>S-adenosyl-L-methionine</name>
        <dbReference type="ChEBI" id="CHEBI:59789"/>
        <label>1</label>
    </ligand>
</feature>
<feature type="binding site" evidence="1">
    <location>
        <begin position="67"/>
        <end position="68"/>
    </location>
    <ligand>
        <name>S-adenosyl-L-methionine</name>
        <dbReference type="ChEBI" id="CHEBI:59789"/>
        <label>2</label>
    </ligand>
</feature>
<feature type="binding site" evidence="1">
    <location>
        <position position="99"/>
    </location>
    <ligand>
        <name>S-adenosyl-L-methionine</name>
        <dbReference type="ChEBI" id="CHEBI:59789"/>
        <label>1</label>
    </ligand>
</feature>
<feature type="binding site" evidence="1">
    <location>
        <position position="126"/>
    </location>
    <ligand>
        <name>S-adenosyl-L-methionine</name>
        <dbReference type="ChEBI" id="CHEBI:59789"/>
        <label>2</label>
    </ligand>
</feature>
<feature type="binding site" evidence="1">
    <location>
        <position position="138"/>
    </location>
    <ligand>
        <name>S-adenosyl-L-methionine</name>
        <dbReference type="ChEBI" id="CHEBI:59789"/>
        <label>2</label>
    </ligand>
</feature>
<feature type="binding site" evidence="1">
    <location>
        <position position="163"/>
    </location>
    <ligand>
        <name>S-adenosyl-L-methionine</name>
        <dbReference type="ChEBI" id="CHEBI:59789"/>
        <label>2</label>
    </ligand>
</feature>
<feature type="mutagenesis site" description="Loss of [4Fe-4S] cofactor, protein does not dimerize, binds heme, does not transfer heme to NarGHI." evidence="3">
    <original>CVQKCPYC</original>
    <variation>SVQKSPYS</variation>
    <location>
        <begin position="16"/>
        <end position="23"/>
    </location>
</feature>
<name>HEMW_ECOLI</name>